<dbReference type="EMBL" id="AF180145">
    <property type="protein sequence ID" value="AAD56928.1"/>
    <property type="molecule type" value="Genomic_DNA"/>
</dbReference>
<dbReference type="EMBL" id="AE008692">
    <property type="protein sequence ID" value="AAV88952.1"/>
    <property type="molecule type" value="Genomic_DNA"/>
</dbReference>
<dbReference type="RefSeq" id="WP_011240257.1">
    <property type="nucleotide sequence ID" value="NZ_CP035711.1"/>
</dbReference>
<dbReference type="SMR" id="Q5NQQ2"/>
<dbReference type="STRING" id="264203.ZMO0328"/>
<dbReference type="GeneID" id="79904460"/>
<dbReference type="KEGG" id="zmo:ZMO0328"/>
<dbReference type="eggNOG" id="COG0231">
    <property type="taxonomic scope" value="Bacteria"/>
</dbReference>
<dbReference type="HOGENOM" id="CLU_074944_1_1_5"/>
<dbReference type="UniPathway" id="UPA00345"/>
<dbReference type="Proteomes" id="UP000001173">
    <property type="component" value="Chromosome"/>
</dbReference>
<dbReference type="GO" id="GO:0005737">
    <property type="term" value="C:cytoplasm"/>
    <property type="evidence" value="ECO:0007669"/>
    <property type="project" value="UniProtKB-SubCell"/>
</dbReference>
<dbReference type="GO" id="GO:0003746">
    <property type="term" value="F:translation elongation factor activity"/>
    <property type="evidence" value="ECO:0007669"/>
    <property type="project" value="UniProtKB-UniRule"/>
</dbReference>
<dbReference type="GO" id="GO:0043043">
    <property type="term" value="P:peptide biosynthetic process"/>
    <property type="evidence" value="ECO:0007669"/>
    <property type="project" value="InterPro"/>
</dbReference>
<dbReference type="CDD" id="cd04470">
    <property type="entry name" value="S1_EF-P_repeat_1"/>
    <property type="match status" value="1"/>
</dbReference>
<dbReference type="CDD" id="cd05794">
    <property type="entry name" value="S1_EF-P_repeat_2"/>
    <property type="match status" value="1"/>
</dbReference>
<dbReference type="FunFam" id="2.30.30.30:FF:000003">
    <property type="entry name" value="Elongation factor P"/>
    <property type="match status" value="1"/>
</dbReference>
<dbReference type="FunFam" id="2.40.50.140:FF:000004">
    <property type="entry name" value="Elongation factor P"/>
    <property type="match status" value="1"/>
</dbReference>
<dbReference type="FunFam" id="2.40.50.140:FF:000009">
    <property type="entry name" value="Elongation factor P"/>
    <property type="match status" value="1"/>
</dbReference>
<dbReference type="Gene3D" id="2.30.30.30">
    <property type="match status" value="1"/>
</dbReference>
<dbReference type="Gene3D" id="2.40.50.140">
    <property type="entry name" value="Nucleic acid-binding proteins"/>
    <property type="match status" value="2"/>
</dbReference>
<dbReference type="HAMAP" id="MF_00141">
    <property type="entry name" value="EF_P"/>
    <property type="match status" value="1"/>
</dbReference>
<dbReference type="InterPro" id="IPR015365">
    <property type="entry name" value="Elong-fact-P_C"/>
</dbReference>
<dbReference type="InterPro" id="IPR012340">
    <property type="entry name" value="NA-bd_OB-fold"/>
</dbReference>
<dbReference type="InterPro" id="IPR014722">
    <property type="entry name" value="Rib_uL2_dom2"/>
</dbReference>
<dbReference type="InterPro" id="IPR020599">
    <property type="entry name" value="Transl_elong_fac_P/YeiP"/>
</dbReference>
<dbReference type="InterPro" id="IPR013185">
    <property type="entry name" value="Transl_elong_KOW-like"/>
</dbReference>
<dbReference type="InterPro" id="IPR001059">
    <property type="entry name" value="Transl_elong_P/YeiP_cen"/>
</dbReference>
<dbReference type="InterPro" id="IPR013852">
    <property type="entry name" value="Transl_elong_P/YeiP_CS"/>
</dbReference>
<dbReference type="InterPro" id="IPR011768">
    <property type="entry name" value="Transl_elongation_fac_P"/>
</dbReference>
<dbReference type="InterPro" id="IPR008991">
    <property type="entry name" value="Translation_prot_SH3-like_sf"/>
</dbReference>
<dbReference type="NCBIfam" id="TIGR00038">
    <property type="entry name" value="efp"/>
    <property type="match status" value="1"/>
</dbReference>
<dbReference type="NCBIfam" id="NF001810">
    <property type="entry name" value="PRK00529.1"/>
    <property type="match status" value="1"/>
</dbReference>
<dbReference type="PANTHER" id="PTHR30053">
    <property type="entry name" value="ELONGATION FACTOR P"/>
    <property type="match status" value="1"/>
</dbReference>
<dbReference type="PANTHER" id="PTHR30053:SF14">
    <property type="entry name" value="TRANSLATION ELONGATION FACTOR KOW-LIKE DOMAIN-CONTAINING PROTEIN"/>
    <property type="match status" value="1"/>
</dbReference>
<dbReference type="Pfam" id="PF01132">
    <property type="entry name" value="EFP"/>
    <property type="match status" value="1"/>
</dbReference>
<dbReference type="Pfam" id="PF08207">
    <property type="entry name" value="EFP_N"/>
    <property type="match status" value="1"/>
</dbReference>
<dbReference type="Pfam" id="PF09285">
    <property type="entry name" value="Elong-fact-P_C"/>
    <property type="match status" value="1"/>
</dbReference>
<dbReference type="PIRSF" id="PIRSF005901">
    <property type="entry name" value="EF-P"/>
    <property type="match status" value="1"/>
</dbReference>
<dbReference type="SMART" id="SM01185">
    <property type="entry name" value="EFP"/>
    <property type="match status" value="1"/>
</dbReference>
<dbReference type="SMART" id="SM00841">
    <property type="entry name" value="Elong-fact-P_C"/>
    <property type="match status" value="1"/>
</dbReference>
<dbReference type="SUPFAM" id="SSF50249">
    <property type="entry name" value="Nucleic acid-binding proteins"/>
    <property type="match status" value="2"/>
</dbReference>
<dbReference type="SUPFAM" id="SSF50104">
    <property type="entry name" value="Translation proteins SH3-like domain"/>
    <property type="match status" value="1"/>
</dbReference>
<dbReference type="PROSITE" id="PS01275">
    <property type="entry name" value="EFP"/>
    <property type="match status" value="1"/>
</dbReference>
<comment type="function">
    <text evidence="1">Involved in peptide bond synthesis. Stimulates efficient translation and peptide-bond synthesis on native or reconstituted 70S ribosomes in vitro. Probably functions indirectly by altering the affinity of the ribosome for aminoacyl-tRNA, thus increasing their reactivity as acceptors for peptidyl transferase.</text>
</comment>
<comment type="pathway">
    <text evidence="1">Protein biosynthesis; polypeptide chain elongation.</text>
</comment>
<comment type="subcellular location">
    <subcellularLocation>
        <location evidence="1">Cytoplasm</location>
    </subcellularLocation>
</comment>
<comment type="similarity">
    <text evidence="1">Belongs to the elongation factor P family.</text>
</comment>
<sequence length="187" mass="20925">MKISGVDIRPGNILEYEGGLWRAAKIQHTQPGKGGAYMQVEMKNLIDGRKTNVRFRSAETVERVRLDTKDFQYLFADGDMLTFMDKETYEQISLPKDLLGDAVAFLQDGMDVVMELYEEKPISVQLPEQVEAEIVEADAVVKGQTASSSYKPAILDNGVRVMVPPHITAGTRIIVDVNTQEYVKRAD</sequence>
<name>EFP_ZYMMO</name>
<reference key="1">
    <citation type="submission" date="1999-08" db="EMBL/GenBank/DDBJ databases">
        <authorList>
            <person name="Lee H.J."/>
            <person name="Kang H.S."/>
        </authorList>
    </citation>
    <scope>NUCLEOTIDE SEQUENCE [GENOMIC DNA]</scope>
    <source>
        <strain>ATCC 31821 / ZM4 / CP4</strain>
    </source>
</reference>
<reference key="2">
    <citation type="journal article" date="2005" name="Nat. Biotechnol.">
        <title>The genome sequence of the ethanologenic bacterium Zymomonas mobilis ZM4.</title>
        <authorList>
            <person name="Seo J.-S."/>
            <person name="Chong H."/>
            <person name="Park H.S."/>
            <person name="Yoon K.-O."/>
            <person name="Jung C."/>
            <person name="Kim J.J."/>
            <person name="Hong J.H."/>
            <person name="Kim H."/>
            <person name="Kim J.-H."/>
            <person name="Kil J.-I."/>
            <person name="Park C.J."/>
            <person name="Oh H.-M."/>
            <person name="Lee J.-S."/>
            <person name="Jin S.-J."/>
            <person name="Um H.-W."/>
            <person name="Lee H.-J."/>
            <person name="Oh S.-J."/>
            <person name="Kim J.Y."/>
            <person name="Kang H.L."/>
            <person name="Lee S.Y."/>
            <person name="Lee K.J."/>
            <person name="Kang H.S."/>
        </authorList>
    </citation>
    <scope>NUCLEOTIDE SEQUENCE [LARGE SCALE GENOMIC DNA]</scope>
    <source>
        <strain>ATCC 31821 / ZM4 / CP4</strain>
    </source>
</reference>
<gene>
    <name evidence="1" type="primary">efp</name>
    <name type="ordered locus">ZMO0328</name>
</gene>
<evidence type="ECO:0000255" key="1">
    <source>
        <dbReference type="HAMAP-Rule" id="MF_00141"/>
    </source>
</evidence>
<protein>
    <recommendedName>
        <fullName evidence="1">Elongation factor P</fullName>
        <shortName evidence="1">EF-P</shortName>
    </recommendedName>
</protein>
<proteinExistence type="inferred from homology"/>
<keyword id="KW-0963">Cytoplasm</keyword>
<keyword id="KW-0251">Elongation factor</keyword>
<keyword id="KW-0648">Protein biosynthesis</keyword>
<keyword id="KW-1185">Reference proteome</keyword>
<accession>Q5NQQ2</accession>
<accession>Q9RNJ9</accession>
<feature type="chain" id="PRO_0000094378" description="Elongation factor P">
    <location>
        <begin position="1"/>
        <end position="187"/>
    </location>
</feature>
<organism>
    <name type="scientific">Zymomonas mobilis subsp. mobilis (strain ATCC 31821 / ZM4 / CP4)</name>
    <dbReference type="NCBI Taxonomy" id="264203"/>
    <lineage>
        <taxon>Bacteria</taxon>
        <taxon>Pseudomonadati</taxon>
        <taxon>Pseudomonadota</taxon>
        <taxon>Alphaproteobacteria</taxon>
        <taxon>Sphingomonadales</taxon>
        <taxon>Zymomonadaceae</taxon>
        <taxon>Zymomonas</taxon>
    </lineage>
</organism>